<evidence type="ECO:0000250" key="1">
    <source>
        <dbReference type="UniProtKB" id="L0E2Z4"/>
    </source>
</evidence>
<evidence type="ECO:0000250" key="2">
    <source>
        <dbReference type="UniProtKB" id="O93868"/>
    </source>
</evidence>
<evidence type="ECO:0000269" key="3">
    <source>
    </source>
</evidence>
<evidence type="ECO:0000269" key="4">
    <source>
    </source>
</evidence>
<evidence type="ECO:0000303" key="5">
    <source>
    </source>
</evidence>
<evidence type="ECO:0000303" key="6">
    <source>
    </source>
</evidence>
<evidence type="ECO:0000305" key="7"/>
<evidence type="ECO:0000305" key="8">
    <source>
    </source>
</evidence>
<proteinExistence type="evidence at transcript level"/>
<organism>
    <name type="scientific">Aspergillus terreus</name>
    <dbReference type="NCBI Taxonomy" id="33178"/>
    <lineage>
        <taxon>Eukaryota</taxon>
        <taxon>Fungi</taxon>
        <taxon>Dikarya</taxon>
        <taxon>Ascomycota</taxon>
        <taxon>Pezizomycotina</taxon>
        <taxon>Eurotiomycetes</taxon>
        <taxon>Eurotiomycetidae</taxon>
        <taxon>Eurotiales</taxon>
        <taxon>Aspergillaceae</taxon>
        <taxon>Aspergillus</taxon>
        <taxon>Aspergillus subgen. Circumdati</taxon>
    </lineage>
</organism>
<gene>
    <name evidence="5" type="primary">pgmD</name>
</gene>
<keyword id="KW-0521">NADP</keyword>
<keyword id="KW-0560">Oxidoreductase</keyword>
<reference key="1">
    <citation type="journal article" date="2017" name="Microorganisms">
        <title>Melanisation of Aspergillus terreus-is butyrolactone I involved in the regulation of both DOPA and DHN types of pigments in submerged culture?</title>
        <authorList>
            <person name="Palonen E.K."/>
            <person name="Raina S."/>
            <person name="Brandt A."/>
            <person name="Meriluoto J."/>
            <person name="Keshavarz T."/>
            <person name="Soini J.T."/>
        </authorList>
    </citation>
    <scope>NUCLEOTIDE SEQUENCE [GENOMIC DNA]</scope>
    <scope>IDENTIFICATION</scope>
    <scope>FUNCTION</scope>
    <scope>INDUCTION</scope>
    <source>
        <strain>MUCL38669</strain>
    </source>
</reference>
<reference key="2">
    <citation type="journal article" date="2022" name="Fungal Genet. Biol.">
        <title>Identification of a polyketide biosynthesis gene cluster by transcriptional regulator activation in Aspergillus terreus.</title>
        <authorList>
            <person name="Tang S."/>
            <person name="Men P."/>
            <person name="Zhang W."/>
            <person name="Li H."/>
            <person name="Li Z."/>
            <person name="Huang X."/>
            <person name="Lu X."/>
        </authorList>
    </citation>
    <scope>FUNCTION</scope>
    <scope>INDUCTION</scope>
    <scope>DISRUPTION PHENOTYPE</scope>
    <scope>PATHWAY</scope>
</reference>
<protein>
    <recommendedName>
        <fullName evidence="6">Short chain dehydrogenase pgmD</fullName>
        <ecNumber evidence="8">1.1.1.-</ecNumber>
    </recommendedName>
    <alternativeName>
        <fullName evidence="6">Pigmented naphthoquinones biosynthesis cluster protein D</fullName>
    </alternativeName>
</protein>
<accession>A0A1W5SR39</accession>
<sequence>MAQPELDLSKAPAHWGMNFTETTHQQPSRSIDPSNVTFPQGYTVVVIGAGKGIGEHIAKAYVQARAENIIITSRTGSDLDRVKKELETLAQQTGQAVKVSTLVQDATKPESYTKLKDLLEEGFNGRLDTLVFCAGGGPVGTLWTPRIDETDVDEWNESIALNFTGSYYAAKYLVPLMLRPQSQGKTIVNITSAASHFTGGNITPASYSIGKLALNRFTQILGENYADQGLVVVAVHPGSSPTPGALGSMPPSLHNILTDDQGLCGAVCVWISKKKREWISGRYICATWDMDELESKKEEIVKEDKLKWRMAV</sequence>
<feature type="chain" id="PRO_0000456007" description="Short chain dehydrogenase pgmD">
    <location>
        <begin position="1"/>
        <end position="312"/>
    </location>
</feature>
<feature type="active site" description="Proton donor" evidence="2">
    <location>
        <position position="207"/>
    </location>
</feature>
<feature type="active site" description="Lowers pKa of active site Tyr" evidence="2">
    <location>
        <position position="211"/>
    </location>
</feature>
<feature type="binding site" evidence="1">
    <location>
        <position position="46"/>
    </location>
    <ligand>
        <name>NADP(+)</name>
        <dbReference type="ChEBI" id="CHEBI:58349"/>
    </ligand>
</feature>
<feature type="binding site" evidence="1">
    <location>
        <position position="47"/>
    </location>
    <ligand>
        <name>NADP(+)</name>
        <dbReference type="ChEBI" id="CHEBI:58349"/>
    </ligand>
</feature>
<feature type="binding site" evidence="1">
    <location>
        <position position="171"/>
    </location>
    <ligand>
        <name>NADP(+)</name>
        <dbReference type="ChEBI" id="CHEBI:58349"/>
    </ligand>
</feature>
<feature type="binding site" evidence="2">
    <location>
        <position position="207"/>
    </location>
    <ligand>
        <name>NADP(+)</name>
        <dbReference type="ChEBI" id="CHEBI:58349"/>
    </ligand>
</feature>
<feature type="binding site" evidence="2">
    <location>
        <position position="211"/>
    </location>
    <ligand>
        <name>NADP(+)</name>
        <dbReference type="ChEBI" id="CHEBI:58349"/>
    </ligand>
</feature>
<feature type="binding site" evidence="1">
    <location>
        <position position="242"/>
    </location>
    <ligand>
        <name>NADP(+)</name>
        <dbReference type="ChEBI" id="CHEBI:58349"/>
    </ligand>
</feature>
<dbReference type="EC" id="1.1.1.-" evidence="8"/>
<dbReference type="EMBL" id="KX470748">
    <property type="protein sequence ID" value="ARB51365.1"/>
    <property type="molecule type" value="mRNA"/>
</dbReference>
<dbReference type="SMR" id="A0A1W5SR39"/>
<dbReference type="VEuPathDB" id="FungiDB:ATEG_06207"/>
<dbReference type="GO" id="GO:0016616">
    <property type="term" value="F:oxidoreductase activity, acting on the CH-OH group of donors, NAD or NADP as acceptor"/>
    <property type="evidence" value="ECO:0007669"/>
    <property type="project" value="TreeGrafter"/>
</dbReference>
<dbReference type="CDD" id="cd05233">
    <property type="entry name" value="SDR_c"/>
    <property type="match status" value="1"/>
</dbReference>
<dbReference type="Gene3D" id="3.40.50.720">
    <property type="entry name" value="NAD(P)-binding Rossmann-like Domain"/>
    <property type="match status" value="1"/>
</dbReference>
<dbReference type="InterPro" id="IPR036291">
    <property type="entry name" value="NAD(P)-bd_dom_sf"/>
</dbReference>
<dbReference type="InterPro" id="IPR002347">
    <property type="entry name" value="SDR_fam"/>
</dbReference>
<dbReference type="PANTHER" id="PTHR42760:SF37">
    <property type="entry name" value="CLAVALDEHYDE DEHYDROGENASE"/>
    <property type="match status" value="1"/>
</dbReference>
<dbReference type="PANTHER" id="PTHR42760">
    <property type="entry name" value="SHORT-CHAIN DEHYDROGENASES/REDUCTASES FAMILY MEMBER"/>
    <property type="match status" value="1"/>
</dbReference>
<dbReference type="Pfam" id="PF00106">
    <property type="entry name" value="adh_short"/>
    <property type="match status" value="1"/>
</dbReference>
<dbReference type="PRINTS" id="PR00081">
    <property type="entry name" value="GDHRDH"/>
</dbReference>
<dbReference type="SUPFAM" id="SSF51735">
    <property type="entry name" value="NAD(P)-binding Rossmann-fold domains"/>
    <property type="match status" value="1"/>
</dbReference>
<comment type="function">
    <text evidence="3 4 8">Short chain dehydrogenase; part of the gene cluster that mediates the biosynthesis of pleosporalin A, ascomycone A, as well as a third cryptic naphthoquinone derived pigment, all responsible for the coloration of conidia (PubMed:28471414, PubMed:35351612). Essential for the production of pleosporalin A, but not the 2 other final products (PubMed:35351612). The pathway begins with the biosynthesis of the cyclized heptaketide 3-acetonyl-1,6,8-trihydroxy-2-naphthaldehyde by the NR-PKS pgmA. The C-6 hydroxyl group is further methylated by the O-methyltransferase pgmB to yield fusarubinaldehyde which is in turn oxidized by the cytochrome P450 monooxygenase pgmC at C-9. The C-1 hydroxyl group is then methylated spontaneously. Although pgmE, pgmD and pgmH are essential for the production of pleosporalin A, it is not the case for the 2 other final products and it remains difficult to assign a specific function to each enzyme. PgmF and pgmG seem not to be involved in pigment biosynthesis although they were regulated by the cluster-specific transcription factor pgmR (Probable) (PubMed:35351612).</text>
</comment>
<comment type="pathway">
    <text evidence="4">Pigment biosynthesis.</text>
</comment>
<comment type="pathway">
    <text evidence="4">Secondary metabolite biosynthesis.</text>
</comment>
<comment type="induction">
    <text evidence="3 4">Expression is significantly up-regulated at the end of late growth phase, in the presence of Butyrolactone I (PubMed:28471414). Expression is positively regulated by the pgm cluster-specific transcription factor pgmR (PubMed:35351612).</text>
</comment>
<comment type="disruption phenotype">
    <text evidence="4">Only abolishes the production of pleosporalin A but not of the 2 other final products.</text>
</comment>
<comment type="similarity">
    <text evidence="7">Belongs to the short-chain dehydrogenases/reductases (SDR) family.</text>
</comment>
<name>PGMD_ASPTE</name>